<keyword id="KW-0113">Calvin cycle</keyword>
<keyword id="KW-0120">Carbon dioxide fixation</keyword>
<keyword id="KW-0150">Chloroplast</keyword>
<keyword id="KW-1015">Disulfide bond</keyword>
<keyword id="KW-0456">Lyase</keyword>
<keyword id="KW-0460">Magnesium</keyword>
<keyword id="KW-0479">Metal-binding</keyword>
<keyword id="KW-0488">Methylation</keyword>
<keyword id="KW-0503">Monooxygenase</keyword>
<keyword id="KW-0560">Oxidoreductase</keyword>
<keyword id="KW-0601">Photorespiration</keyword>
<keyword id="KW-0602">Photosynthesis</keyword>
<keyword id="KW-0934">Plastid</keyword>
<comment type="function">
    <text evidence="1">RuBisCO catalyzes two reactions: the carboxylation of D-ribulose 1,5-bisphosphate, the primary event in carbon dioxide fixation, as well as the oxidative fragmentation of the pentose substrate in the photorespiration process. Both reactions occur simultaneously and in competition at the same active site.</text>
</comment>
<comment type="catalytic activity">
    <reaction evidence="1">
        <text>2 (2R)-3-phosphoglycerate + 2 H(+) = D-ribulose 1,5-bisphosphate + CO2 + H2O</text>
        <dbReference type="Rhea" id="RHEA:23124"/>
        <dbReference type="ChEBI" id="CHEBI:15377"/>
        <dbReference type="ChEBI" id="CHEBI:15378"/>
        <dbReference type="ChEBI" id="CHEBI:16526"/>
        <dbReference type="ChEBI" id="CHEBI:57870"/>
        <dbReference type="ChEBI" id="CHEBI:58272"/>
        <dbReference type="EC" id="4.1.1.39"/>
    </reaction>
</comment>
<comment type="catalytic activity">
    <reaction evidence="1">
        <text>D-ribulose 1,5-bisphosphate + O2 = 2-phosphoglycolate + (2R)-3-phosphoglycerate + 2 H(+)</text>
        <dbReference type="Rhea" id="RHEA:36631"/>
        <dbReference type="ChEBI" id="CHEBI:15378"/>
        <dbReference type="ChEBI" id="CHEBI:15379"/>
        <dbReference type="ChEBI" id="CHEBI:57870"/>
        <dbReference type="ChEBI" id="CHEBI:58033"/>
        <dbReference type="ChEBI" id="CHEBI:58272"/>
    </reaction>
</comment>
<comment type="cofactor">
    <cofactor evidence="1">
        <name>Mg(2+)</name>
        <dbReference type="ChEBI" id="CHEBI:18420"/>
    </cofactor>
    <text evidence="1">Binds 1 Mg(2+) ion per subunit.</text>
</comment>
<comment type="subunit">
    <text evidence="1">Heterohexadecamer of 8 large chains and 8 small chains; disulfide-linked. The disulfide link is formed within the large subunit homodimers.</text>
</comment>
<comment type="subcellular location">
    <subcellularLocation>
        <location>Plastid</location>
        <location>Chloroplast</location>
    </subcellularLocation>
</comment>
<comment type="PTM">
    <text evidence="1">The disulfide bond which can form in the large chain dimeric partners within the hexadecamer appears to be associated with oxidative stress and protein turnover.</text>
</comment>
<comment type="miscellaneous">
    <text evidence="1">The basic functional RuBisCO is composed of a large chain homodimer in a 'head-to-tail' conformation. In form I RuBisCO this homodimer is arranged in a barrel-like tetramer with the small subunits forming a tetrameric 'cap' on each end of the 'barrel'.</text>
</comment>
<comment type="similarity">
    <text evidence="1">Belongs to the RuBisCO large chain family. Type I subfamily.</text>
</comment>
<dbReference type="EC" id="4.1.1.39" evidence="1"/>
<dbReference type="EMBL" id="L01957">
    <property type="protein sequence ID" value="AAA84661.2"/>
    <property type="molecule type" value="Genomic_DNA"/>
</dbReference>
<dbReference type="SMR" id="P28456"/>
<dbReference type="GO" id="GO:0009507">
    <property type="term" value="C:chloroplast"/>
    <property type="evidence" value="ECO:0007669"/>
    <property type="project" value="UniProtKB-SubCell"/>
</dbReference>
<dbReference type="GO" id="GO:0000287">
    <property type="term" value="F:magnesium ion binding"/>
    <property type="evidence" value="ECO:0007669"/>
    <property type="project" value="InterPro"/>
</dbReference>
<dbReference type="GO" id="GO:0004497">
    <property type="term" value="F:monooxygenase activity"/>
    <property type="evidence" value="ECO:0007669"/>
    <property type="project" value="UniProtKB-KW"/>
</dbReference>
<dbReference type="GO" id="GO:0016984">
    <property type="term" value="F:ribulose-bisphosphate carboxylase activity"/>
    <property type="evidence" value="ECO:0007669"/>
    <property type="project" value="UniProtKB-EC"/>
</dbReference>
<dbReference type="GO" id="GO:0009853">
    <property type="term" value="P:photorespiration"/>
    <property type="evidence" value="ECO:0007669"/>
    <property type="project" value="UniProtKB-KW"/>
</dbReference>
<dbReference type="GO" id="GO:0019253">
    <property type="term" value="P:reductive pentose-phosphate cycle"/>
    <property type="evidence" value="ECO:0007669"/>
    <property type="project" value="UniProtKB-KW"/>
</dbReference>
<dbReference type="CDD" id="cd08212">
    <property type="entry name" value="RuBisCO_large_I"/>
    <property type="match status" value="1"/>
</dbReference>
<dbReference type="FunFam" id="3.20.20.110:FF:000001">
    <property type="entry name" value="Ribulose bisphosphate carboxylase large chain"/>
    <property type="match status" value="1"/>
</dbReference>
<dbReference type="FunFam" id="3.30.70.150:FF:000001">
    <property type="entry name" value="Ribulose bisphosphate carboxylase large chain"/>
    <property type="match status" value="1"/>
</dbReference>
<dbReference type="Gene3D" id="3.20.20.110">
    <property type="entry name" value="Ribulose bisphosphate carboxylase, large subunit, C-terminal domain"/>
    <property type="match status" value="1"/>
</dbReference>
<dbReference type="Gene3D" id="3.30.70.150">
    <property type="entry name" value="RuBisCO large subunit, N-terminal domain"/>
    <property type="match status" value="1"/>
</dbReference>
<dbReference type="HAMAP" id="MF_01338">
    <property type="entry name" value="RuBisCO_L_type1"/>
    <property type="match status" value="1"/>
</dbReference>
<dbReference type="InterPro" id="IPR033966">
    <property type="entry name" value="RuBisCO"/>
</dbReference>
<dbReference type="InterPro" id="IPR020878">
    <property type="entry name" value="RuBisCo_large_chain_AS"/>
</dbReference>
<dbReference type="InterPro" id="IPR000685">
    <property type="entry name" value="RuBisCO_lsu_C"/>
</dbReference>
<dbReference type="InterPro" id="IPR036376">
    <property type="entry name" value="RuBisCO_lsu_C_sf"/>
</dbReference>
<dbReference type="InterPro" id="IPR017443">
    <property type="entry name" value="RuBisCO_lsu_fd_N"/>
</dbReference>
<dbReference type="InterPro" id="IPR036422">
    <property type="entry name" value="RuBisCO_lsu_N_sf"/>
</dbReference>
<dbReference type="InterPro" id="IPR020888">
    <property type="entry name" value="RuBisCO_lsuI"/>
</dbReference>
<dbReference type="NCBIfam" id="NF003252">
    <property type="entry name" value="PRK04208.1"/>
    <property type="match status" value="1"/>
</dbReference>
<dbReference type="PANTHER" id="PTHR42704">
    <property type="entry name" value="RIBULOSE BISPHOSPHATE CARBOXYLASE"/>
    <property type="match status" value="1"/>
</dbReference>
<dbReference type="PANTHER" id="PTHR42704:SF15">
    <property type="entry name" value="RIBULOSE BISPHOSPHATE CARBOXYLASE LARGE CHAIN"/>
    <property type="match status" value="1"/>
</dbReference>
<dbReference type="Pfam" id="PF00016">
    <property type="entry name" value="RuBisCO_large"/>
    <property type="match status" value="1"/>
</dbReference>
<dbReference type="Pfam" id="PF02788">
    <property type="entry name" value="RuBisCO_large_N"/>
    <property type="match status" value="1"/>
</dbReference>
<dbReference type="SFLD" id="SFLDG01052">
    <property type="entry name" value="RuBisCO"/>
    <property type="match status" value="1"/>
</dbReference>
<dbReference type="SFLD" id="SFLDS00014">
    <property type="entry name" value="RuBisCO"/>
    <property type="match status" value="1"/>
</dbReference>
<dbReference type="SFLD" id="SFLDG00301">
    <property type="entry name" value="RuBisCO-like_proteins"/>
    <property type="match status" value="1"/>
</dbReference>
<dbReference type="SUPFAM" id="SSF51649">
    <property type="entry name" value="RuBisCo, C-terminal domain"/>
    <property type="match status" value="1"/>
</dbReference>
<dbReference type="SUPFAM" id="SSF54966">
    <property type="entry name" value="RuBisCO, large subunit, small (N-terminal) domain"/>
    <property type="match status" value="1"/>
</dbReference>
<dbReference type="PROSITE" id="PS00157">
    <property type="entry name" value="RUBISCO_LARGE"/>
    <property type="match status" value="1"/>
</dbReference>
<accession>P28456</accession>
<organism>
    <name type="scientific">Tasmannia insipida</name>
    <name type="common">Pepperbush</name>
    <name type="synonym">Drimys insipida</name>
    <dbReference type="NCBI Taxonomy" id="3422"/>
    <lineage>
        <taxon>Eukaryota</taxon>
        <taxon>Viridiplantae</taxon>
        <taxon>Streptophyta</taxon>
        <taxon>Embryophyta</taxon>
        <taxon>Tracheophyta</taxon>
        <taxon>Spermatophyta</taxon>
        <taxon>Magnoliopsida</taxon>
        <taxon>Magnoliidae</taxon>
        <taxon>Canellales</taxon>
        <taxon>Winteraceae</taxon>
        <taxon>Tasmannia</taxon>
    </lineage>
</organism>
<gene>
    <name evidence="1" type="primary">rbcL</name>
</gene>
<feature type="chain" id="PRO_0000062602" description="Ribulose bisphosphate carboxylase large chain">
    <location>
        <begin position="1" status="less than"/>
        <end position="467"/>
    </location>
</feature>
<feature type="active site" description="Proton acceptor" evidence="1">
    <location>
        <position position="166"/>
    </location>
</feature>
<feature type="active site" description="Proton acceptor" evidence="1">
    <location>
        <position position="285"/>
    </location>
</feature>
<feature type="binding site" description="in homodimeric partner" evidence="1">
    <location>
        <position position="114"/>
    </location>
    <ligand>
        <name>substrate</name>
    </ligand>
</feature>
<feature type="binding site" evidence="1">
    <location>
        <position position="164"/>
    </location>
    <ligand>
        <name>substrate</name>
    </ligand>
</feature>
<feature type="binding site" evidence="1">
    <location>
        <position position="168"/>
    </location>
    <ligand>
        <name>substrate</name>
    </ligand>
</feature>
<feature type="binding site" description="via carbamate group" evidence="1">
    <location>
        <position position="192"/>
    </location>
    <ligand>
        <name>Mg(2+)</name>
        <dbReference type="ChEBI" id="CHEBI:18420"/>
    </ligand>
</feature>
<feature type="binding site" evidence="1">
    <location>
        <position position="194"/>
    </location>
    <ligand>
        <name>Mg(2+)</name>
        <dbReference type="ChEBI" id="CHEBI:18420"/>
    </ligand>
</feature>
<feature type="binding site" evidence="1">
    <location>
        <position position="195"/>
    </location>
    <ligand>
        <name>Mg(2+)</name>
        <dbReference type="ChEBI" id="CHEBI:18420"/>
    </ligand>
</feature>
<feature type="binding site" evidence="1">
    <location>
        <position position="286"/>
    </location>
    <ligand>
        <name>substrate</name>
    </ligand>
</feature>
<feature type="binding site" evidence="1">
    <location>
        <position position="318"/>
    </location>
    <ligand>
        <name>substrate</name>
    </ligand>
</feature>
<feature type="binding site" evidence="1">
    <location>
        <position position="370"/>
    </location>
    <ligand>
        <name>substrate</name>
    </ligand>
</feature>
<feature type="site" description="Transition state stabilizer" evidence="1">
    <location>
        <position position="325"/>
    </location>
</feature>
<feature type="modified residue" description="N6,N6,N6-trimethyllysine" evidence="1">
    <location>
        <position position="5"/>
    </location>
</feature>
<feature type="modified residue" description="N6-carboxylysine" evidence="1">
    <location>
        <position position="192"/>
    </location>
</feature>
<feature type="disulfide bond" description="Interchain; in linked form" evidence="1">
    <location>
        <position position="238"/>
    </location>
</feature>
<feature type="non-terminal residue">
    <location>
        <position position="1"/>
    </location>
</feature>
<protein>
    <recommendedName>
        <fullName evidence="1">Ribulose bisphosphate carboxylase large chain</fullName>
        <shortName evidence="1">RuBisCO large subunit</shortName>
        <ecNumber evidence="1">4.1.1.39</ecNumber>
    </recommendedName>
</protein>
<geneLocation type="chloroplast"/>
<sequence length="467" mass="51877">SVGFKAGVKDYKLTYYTPDYETKDTDILAAFRVTPQPGVPPEEAGAAVAAESSTGTWTTVWTDGLTSLDRYKGRCYHIEPVAGEEEQYIAYVAYPLDLFEEGSVTNMFTSIVGNVFGFKALRALRLEDLRIPIAYVKTFQGPPHGIQVERDKLNKYGRPLLGCTIKPKLGLSAKNYGRAVYECLRGGLDFTKDDENVNSQPFMRWRDRFVFCAEALYKAQAETGEIKGHYLNATAGTCEEMMKRAVFARELGVPIVMHDYLTGGFTANTTLAHYCRDNGLLLHIHRAMHAVIDRQKNHGMHFRVLAKALRMSGGDHIHAGTVVGKLEGERDITLGFVDLLRDDFIEKDRSRGIYFTQDWVSMPGVLPVASGGIHVWHMPALTEIFGDDSVLQFGGGTLGHPWGNAPGAVANRVALEACVQARNEGRDLAREGNEIIREACKWSPELAAACEVWKEIKFEFKAVDTLD</sequence>
<evidence type="ECO:0000255" key="1">
    <source>
        <dbReference type="HAMAP-Rule" id="MF_01338"/>
    </source>
</evidence>
<proteinExistence type="inferred from homology"/>
<name>RBL_TASIN</name>
<reference key="1">
    <citation type="journal article" date="1992" name="Science">
        <title>Carnivorous plants: phylogeny and structural evolution.</title>
        <authorList>
            <person name="Albert V.A."/>
            <person name="Williams S.E."/>
            <person name="Chase M.W."/>
        </authorList>
    </citation>
    <scope>NUCLEOTIDE SEQUENCE [GENOMIC DNA]</scope>
</reference>